<organism>
    <name type="scientific">Pseudomonas syringae pv. tomato (strain ATCC BAA-871 / DC3000)</name>
    <dbReference type="NCBI Taxonomy" id="223283"/>
    <lineage>
        <taxon>Bacteria</taxon>
        <taxon>Pseudomonadati</taxon>
        <taxon>Pseudomonadota</taxon>
        <taxon>Gammaproteobacteria</taxon>
        <taxon>Pseudomonadales</taxon>
        <taxon>Pseudomonadaceae</taxon>
        <taxon>Pseudomonas</taxon>
    </lineage>
</organism>
<keyword id="KW-0067">ATP-binding</keyword>
<keyword id="KW-0378">Hydrolase</keyword>
<keyword id="KW-0547">Nucleotide-binding</keyword>
<keyword id="KW-1185">Reference proteome</keyword>
<proteinExistence type="inferred from homology"/>
<feature type="chain" id="PRO_0000185033" description="5-oxoprolinase subunit A 3">
    <location>
        <begin position="1"/>
        <end position="256"/>
    </location>
</feature>
<name>PXPA3_PSESM</name>
<dbReference type="EC" id="3.5.2.9" evidence="1"/>
<dbReference type="EMBL" id="AE016853">
    <property type="protein sequence ID" value="AAO58800.1"/>
    <property type="molecule type" value="Genomic_DNA"/>
</dbReference>
<dbReference type="RefSeq" id="NP_795105.1">
    <property type="nucleotide sequence ID" value="NC_004578.1"/>
</dbReference>
<dbReference type="RefSeq" id="WP_011105454.1">
    <property type="nucleotide sequence ID" value="NC_004578.1"/>
</dbReference>
<dbReference type="SMR" id="Q87UC7"/>
<dbReference type="STRING" id="223283.PSPTO_5378"/>
<dbReference type="GeneID" id="1187065"/>
<dbReference type="KEGG" id="pst:PSPTO_5378"/>
<dbReference type="PATRIC" id="fig|223283.9.peg.5504"/>
<dbReference type="eggNOG" id="COG1540">
    <property type="taxonomic scope" value="Bacteria"/>
</dbReference>
<dbReference type="HOGENOM" id="CLU_069535_0_0_6"/>
<dbReference type="OrthoDB" id="9773478at2"/>
<dbReference type="PhylomeDB" id="Q87UC7"/>
<dbReference type="Proteomes" id="UP000002515">
    <property type="component" value="Chromosome"/>
</dbReference>
<dbReference type="GO" id="GO:0017168">
    <property type="term" value="F:5-oxoprolinase (ATP-hydrolyzing) activity"/>
    <property type="evidence" value="ECO:0007669"/>
    <property type="project" value="UniProtKB-UniRule"/>
</dbReference>
<dbReference type="GO" id="GO:0005524">
    <property type="term" value="F:ATP binding"/>
    <property type="evidence" value="ECO:0007669"/>
    <property type="project" value="UniProtKB-UniRule"/>
</dbReference>
<dbReference type="GO" id="GO:0005975">
    <property type="term" value="P:carbohydrate metabolic process"/>
    <property type="evidence" value="ECO:0007669"/>
    <property type="project" value="InterPro"/>
</dbReference>
<dbReference type="CDD" id="cd10787">
    <property type="entry name" value="LamB_YcsF_like"/>
    <property type="match status" value="1"/>
</dbReference>
<dbReference type="Gene3D" id="3.20.20.370">
    <property type="entry name" value="Glycoside hydrolase/deacetylase"/>
    <property type="match status" value="1"/>
</dbReference>
<dbReference type="HAMAP" id="MF_00691">
    <property type="entry name" value="PxpA"/>
    <property type="match status" value="1"/>
</dbReference>
<dbReference type="InterPro" id="IPR011330">
    <property type="entry name" value="Glyco_hydro/deAcase_b/a-brl"/>
</dbReference>
<dbReference type="InterPro" id="IPR005501">
    <property type="entry name" value="LamB/YcsF/PxpA-like"/>
</dbReference>
<dbReference type="NCBIfam" id="NF003814">
    <property type="entry name" value="PRK05406.1-3"/>
    <property type="match status" value="1"/>
</dbReference>
<dbReference type="NCBIfam" id="NF003816">
    <property type="entry name" value="PRK05406.1-5"/>
    <property type="match status" value="1"/>
</dbReference>
<dbReference type="PANTHER" id="PTHR30292:SF0">
    <property type="entry name" value="5-OXOPROLINASE SUBUNIT A"/>
    <property type="match status" value="1"/>
</dbReference>
<dbReference type="PANTHER" id="PTHR30292">
    <property type="entry name" value="UNCHARACTERIZED PROTEIN YBGL-RELATED"/>
    <property type="match status" value="1"/>
</dbReference>
<dbReference type="Pfam" id="PF03746">
    <property type="entry name" value="LamB_YcsF"/>
    <property type="match status" value="1"/>
</dbReference>
<dbReference type="SUPFAM" id="SSF88713">
    <property type="entry name" value="Glycoside hydrolase/deacetylase"/>
    <property type="match status" value="1"/>
</dbReference>
<protein>
    <recommendedName>
        <fullName evidence="1">5-oxoprolinase subunit A 3</fullName>
        <shortName evidence="1">5-OPase subunit A 3</shortName>
        <ecNumber evidence="1">3.5.2.9</ecNumber>
    </recommendedName>
    <alternativeName>
        <fullName evidence="1">5-oxoprolinase (ATP-hydrolyzing) subunit A 3</fullName>
    </alternativeName>
</protein>
<reference key="1">
    <citation type="journal article" date="2003" name="Proc. Natl. Acad. Sci. U.S.A.">
        <title>The complete genome sequence of the Arabidopsis and tomato pathogen Pseudomonas syringae pv. tomato DC3000.</title>
        <authorList>
            <person name="Buell C.R."/>
            <person name="Joardar V."/>
            <person name="Lindeberg M."/>
            <person name="Selengut J."/>
            <person name="Paulsen I.T."/>
            <person name="Gwinn M.L."/>
            <person name="Dodson R.J."/>
            <person name="DeBoy R.T."/>
            <person name="Durkin A.S."/>
            <person name="Kolonay J.F."/>
            <person name="Madupu R."/>
            <person name="Daugherty S.C."/>
            <person name="Brinkac L.M."/>
            <person name="Beanan M.J."/>
            <person name="Haft D.H."/>
            <person name="Nelson W.C."/>
            <person name="Davidsen T.M."/>
            <person name="Zafar N."/>
            <person name="Zhou L."/>
            <person name="Liu J."/>
            <person name="Yuan Q."/>
            <person name="Khouri H.M."/>
            <person name="Fedorova N.B."/>
            <person name="Tran B."/>
            <person name="Russell D."/>
            <person name="Berry K.J."/>
            <person name="Utterback T.R."/>
            <person name="Van Aken S.E."/>
            <person name="Feldblyum T.V."/>
            <person name="D'Ascenzo M."/>
            <person name="Deng W.-L."/>
            <person name="Ramos A.R."/>
            <person name="Alfano J.R."/>
            <person name="Cartinhour S."/>
            <person name="Chatterjee A.K."/>
            <person name="Delaney T.P."/>
            <person name="Lazarowitz S.G."/>
            <person name="Martin G.B."/>
            <person name="Schneider D.J."/>
            <person name="Tang X."/>
            <person name="Bender C.L."/>
            <person name="White O."/>
            <person name="Fraser C.M."/>
            <person name="Collmer A."/>
        </authorList>
    </citation>
    <scope>NUCLEOTIDE SEQUENCE [LARGE SCALE GENOMIC DNA]</scope>
    <source>
        <strain>ATCC BAA-871 / DC3000</strain>
    </source>
</reference>
<accession>Q87UC7</accession>
<evidence type="ECO:0000255" key="1">
    <source>
        <dbReference type="HAMAP-Rule" id="MF_00691"/>
    </source>
</evidence>
<gene>
    <name evidence="1" type="primary">pxpA3</name>
    <name type="ordered locus">PSPTO_5378</name>
</gene>
<sequence length="256" mass="27063">MRAIDLNSDLGESFGAWSMGDDAAMLDIVTSANVACGFHAGDPAGILRTLKAAAAKNVTIGAHVSYPDKVGFGRRNMDVASDELTADVIYQIGSLQGLAKAAGTSVRYVKPHGALYNTIAHDRRQAMAVIEAIRAIDPALVLVALAGSTLIELARSEGLQCIAEAFADRAYTPQGTLVSRREPGAVLHDPELVAQRMLRLVQSGSIEAIDGSLVRIEADSICVHGDSPAAVEMARELRRVLEQASTSLQPFAGKRS</sequence>
<comment type="function">
    <text evidence="1">Catalyzes the cleavage of 5-oxoproline to form L-glutamate coupled to the hydrolysis of ATP to ADP and inorganic phosphate.</text>
</comment>
<comment type="catalytic activity">
    <reaction evidence="1">
        <text>5-oxo-L-proline + ATP + 2 H2O = L-glutamate + ADP + phosphate + H(+)</text>
        <dbReference type="Rhea" id="RHEA:10348"/>
        <dbReference type="ChEBI" id="CHEBI:15377"/>
        <dbReference type="ChEBI" id="CHEBI:15378"/>
        <dbReference type="ChEBI" id="CHEBI:29985"/>
        <dbReference type="ChEBI" id="CHEBI:30616"/>
        <dbReference type="ChEBI" id="CHEBI:43474"/>
        <dbReference type="ChEBI" id="CHEBI:58402"/>
        <dbReference type="ChEBI" id="CHEBI:456216"/>
        <dbReference type="EC" id="3.5.2.9"/>
    </reaction>
</comment>
<comment type="subunit">
    <text evidence="1">Forms a complex composed of PxpA, PxpB and PxpC.</text>
</comment>
<comment type="similarity">
    <text evidence="1">Belongs to the LamB/PxpA family.</text>
</comment>